<sequence length="47" mass="5182">MKKWLLIIAGALIISACANKDVYFNGAEGSHSGVKFDKDSRQWGLNQ</sequence>
<evidence type="ECO:0000255" key="1">
    <source>
        <dbReference type="PROSITE-ProRule" id="PRU00303"/>
    </source>
</evidence>
<evidence type="ECO:0000256" key="2">
    <source>
        <dbReference type="SAM" id="MobiDB-lite"/>
    </source>
</evidence>
<organism>
    <name type="scientific">Haemophilus influenzae (strain ATCC 51907 / DSM 11121 / KW20 / Rd)</name>
    <dbReference type="NCBI Taxonomy" id="71421"/>
    <lineage>
        <taxon>Bacteria</taxon>
        <taxon>Pseudomonadati</taxon>
        <taxon>Pseudomonadota</taxon>
        <taxon>Gammaproteobacteria</taxon>
        <taxon>Pasteurellales</taxon>
        <taxon>Pasteurellaceae</taxon>
        <taxon>Haemophilus</taxon>
    </lineage>
</organism>
<feature type="signal peptide" evidence="1">
    <location>
        <begin position="1"/>
        <end position="18"/>
    </location>
</feature>
<feature type="chain" id="PRO_0000013965" description="Uncharacterized protein HI_1192">
    <location>
        <begin position="19"/>
        <end position="47"/>
    </location>
</feature>
<feature type="region of interest" description="Disordered" evidence="2">
    <location>
        <begin position="28"/>
        <end position="47"/>
    </location>
</feature>
<proteinExistence type="inferred from homology"/>
<accession>P44125</accession>
<gene>
    <name type="ordered locus">HI_1192</name>
</gene>
<keyword id="KW-1185">Reference proteome</keyword>
<keyword id="KW-0732">Signal</keyword>
<dbReference type="EMBL" id="L42023">
    <property type="protein sequence ID" value="AAC22847.1"/>
    <property type="molecule type" value="Genomic_DNA"/>
</dbReference>
<dbReference type="PIR" id="H64021">
    <property type="entry name" value="H64021"/>
</dbReference>
<dbReference type="RefSeq" id="NP_439348.1">
    <property type="nucleotide sequence ID" value="NC_000907.1"/>
</dbReference>
<dbReference type="EnsemblBacteria" id="AAC22847">
    <property type="protein sequence ID" value="AAC22847"/>
    <property type="gene ID" value="HI_1192"/>
</dbReference>
<dbReference type="KEGG" id="hin:HI_1192"/>
<dbReference type="PATRIC" id="fig|71421.8.peg.1244"/>
<dbReference type="eggNOG" id="ENOG5030S7A">
    <property type="taxonomic scope" value="Bacteria"/>
</dbReference>
<dbReference type="HOGENOM" id="CLU_206933_0_0_6"/>
<dbReference type="BioCyc" id="HINF71421:G1GJ1-1223-MONOMER"/>
<dbReference type="Proteomes" id="UP000000579">
    <property type="component" value="Chromosome"/>
</dbReference>
<dbReference type="PROSITE" id="PS51257">
    <property type="entry name" value="PROKAR_LIPOPROTEIN"/>
    <property type="match status" value="1"/>
</dbReference>
<reference key="1">
    <citation type="journal article" date="1995" name="Science">
        <title>Whole-genome random sequencing and assembly of Haemophilus influenzae Rd.</title>
        <authorList>
            <person name="Fleischmann R.D."/>
            <person name="Adams M.D."/>
            <person name="White O."/>
            <person name="Clayton R.A."/>
            <person name="Kirkness E.F."/>
            <person name="Kerlavage A.R."/>
            <person name="Bult C.J."/>
            <person name="Tomb J.-F."/>
            <person name="Dougherty B.A."/>
            <person name="Merrick J.M."/>
            <person name="McKenney K."/>
            <person name="Sutton G.G."/>
            <person name="FitzHugh W."/>
            <person name="Fields C.A."/>
            <person name="Gocayne J.D."/>
            <person name="Scott J.D."/>
            <person name="Shirley R."/>
            <person name="Liu L.-I."/>
            <person name="Glodek A."/>
            <person name="Kelley J.M."/>
            <person name="Weidman J.F."/>
            <person name="Phillips C.A."/>
            <person name="Spriggs T."/>
            <person name="Hedblom E."/>
            <person name="Cotton M.D."/>
            <person name="Utterback T.R."/>
            <person name="Hanna M.C."/>
            <person name="Nguyen D.T."/>
            <person name="Saudek D.M."/>
            <person name="Brandon R.C."/>
            <person name="Fine L.D."/>
            <person name="Fritchman J.L."/>
            <person name="Fuhrmann J.L."/>
            <person name="Geoghagen N.S.M."/>
            <person name="Gnehm C.L."/>
            <person name="McDonald L.A."/>
            <person name="Small K.V."/>
            <person name="Fraser C.M."/>
            <person name="Smith H.O."/>
            <person name="Venter J.C."/>
        </authorList>
    </citation>
    <scope>NUCLEOTIDE SEQUENCE [LARGE SCALE GENOMIC DNA]</scope>
    <source>
        <strain>ATCC 51907 / DSM 11121 / KW20 / Rd</strain>
    </source>
</reference>
<protein>
    <recommendedName>
        <fullName>Uncharacterized protein HI_1192</fullName>
    </recommendedName>
</protein>
<name>Y1192_HAEIN</name>